<comment type="similarity">
    <text evidence="1">Belongs to the universal ribosomal protein uS2 family.</text>
</comment>
<organism>
    <name type="scientific">Rickettsia canadensis (strain McKiel)</name>
    <dbReference type="NCBI Taxonomy" id="293613"/>
    <lineage>
        <taxon>Bacteria</taxon>
        <taxon>Pseudomonadati</taxon>
        <taxon>Pseudomonadota</taxon>
        <taxon>Alphaproteobacteria</taxon>
        <taxon>Rickettsiales</taxon>
        <taxon>Rickettsiaceae</taxon>
        <taxon>Rickettsieae</taxon>
        <taxon>Rickettsia</taxon>
        <taxon>belli group</taxon>
    </lineage>
</organism>
<sequence>MSKIPSVNIKELLDAGVHFGHKTSRWNPKMGSYIYGERDDVHIIDLRQSAVLMSVALNAIYETVKKDGKILFVSTKIQASDIIAEYAEKCGQYYVNHRWLGGMLTNWKTIAGSIEKLNKLEKTLGNEEALMGYTKKEILDMSRKKDKLLLSLAGIRNLNSKPDLLVVIDTNKEHIAINEAVKLNVPIVAVVDTNSNPDNVDYPIPGNDDSIRSIRLYCSLFADAALQGLAESMKASGVDMGAIQEHTDKALTSKSVSKLKQTKKFSKMKNIDEETNTEFEQALNDADKNKNSENA</sequence>
<feature type="chain" id="PRO_1000004055" description="Small ribosomal subunit protein uS2">
    <location>
        <begin position="1"/>
        <end position="295"/>
    </location>
</feature>
<keyword id="KW-0687">Ribonucleoprotein</keyword>
<keyword id="KW-0689">Ribosomal protein</keyword>
<evidence type="ECO:0000255" key="1">
    <source>
        <dbReference type="HAMAP-Rule" id="MF_00291"/>
    </source>
</evidence>
<evidence type="ECO:0000305" key="2"/>
<proteinExistence type="inferred from homology"/>
<dbReference type="EMBL" id="CP000409">
    <property type="protein sequence ID" value="ABV73033.1"/>
    <property type="molecule type" value="Genomic_DNA"/>
</dbReference>
<dbReference type="RefSeq" id="WP_012148234.1">
    <property type="nucleotide sequence ID" value="NC_009879.1"/>
</dbReference>
<dbReference type="SMR" id="A8EXF0"/>
<dbReference type="STRING" id="293613.A1E_00415"/>
<dbReference type="KEGG" id="rcm:A1E_00415"/>
<dbReference type="eggNOG" id="COG0052">
    <property type="taxonomic scope" value="Bacteria"/>
</dbReference>
<dbReference type="HOGENOM" id="CLU_040318_2_1_5"/>
<dbReference type="Proteomes" id="UP000007056">
    <property type="component" value="Chromosome"/>
</dbReference>
<dbReference type="GO" id="GO:0022627">
    <property type="term" value="C:cytosolic small ribosomal subunit"/>
    <property type="evidence" value="ECO:0007669"/>
    <property type="project" value="TreeGrafter"/>
</dbReference>
<dbReference type="GO" id="GO:0003735">
    <property type="term" value="F:structural constituent of ribosome"/>
    <property type="evidence" value="ECO:0007669"/>
    <property type="project" value="InterPro"/>
</dbReference>
<dbReference type="GO" id="GO:0006412">
    <property type="term" value="P:translation"/>
    <property type="evidence" value="ECO:0007669"/>
    <property type="project" value="UniProtKB-UniRule"/>
</dbReference>
<dbReference type="CDD" id="cd01425">
    <property type="entry name" value="RPS2"/>
    <property type="match status" value="1"/>
</dbReference>
<dbReference type="Gene3D" id="3.40.50.10490">
    <property type="entry name" value="Glucose-6-phosphate isomerase like protein, domain 1"/>
    <property type="match status" value="1"/>
</dbReference>
<dbReference type="Gene3D" id="1.10.287.610">
    <property type="entry name" value="Helix hairpin bin"/>
    <property type="match status" value="1"/>
</dbReference>
<dbReference type="HAMAP" id="MF_00291_B">
    <property type="entry name" value="Ribosomal_uS2_B"/>
    <property type="match status" value="1"/>
</dbReference>
<dbReference type="InterPro" id="IPR001865">
    <property type="entry name" value="Ribosomal_uS2"/>
</dbReference>
<dbReference type="InterPro" id="IPR005706">
    <property type="entry name" value="Ribosomal_uS2_bac/mit/plastid"/>
</dbReference>
<dbReference type="InterPro" id="IPR018130">
    <property type="entry name" value="Ribosomal_uS2_CS"/>
</dbReference>
<dbReference type="InterPro" id="IPR023591">
    <property type="entry name" value="Ribosomal_uS2_flav_dom_sf"/>
</dbReference>
<dbReference type="NCBIfam" id="TIGR01011">
    <property type="entry name" value="rpsB_bact"/>
    <property type="match status" value="1"/>
</dbReference>
<dbReference type="PANTHER" id="PTHR12534">
    <property type="entry name" value="30S RIBOSOMAL PROTEIN S2 PROKARYOTIC AND ORGANELLAR"/>
    <property type="match status" value="1"/>
</dbReference>
<dbReference type="PANTHER" id="PTHR12534:SF0">
    <property type="entry name" value="SMALL RIBOSOMAL SUBUNIT PROTEIN US2M"/>
    <property type="match status" value="1"/>
</dbReference>
<dbReference type="Pfam" id="PF00318">
    <property type="entry name" value="Ribosomal_S2"/>
    <property type="match status" value="1"/>
</dbReference>
<dbReference type="PRINTS" id="PR00395">
    <property type="entry name" value="RIBOSOMALS2"/>
</dbReference>
<dbReference type="SUPFAM" id="SSF52313">
    <property type="entry name" value="Ribosomal protein S2"/>
    <property type="match status" value="1"/>
</dbReference>
<dbReference type="PROSITE" id="PS00962">
    <property type="entry name" value="RIBOSOMAL_S2_1"/>
    <property type="match status" value="1"/>
</dbReference>
<dbReference type="PROSITE" id="PS00963">
    <property type="entry name" value="RIBOSOMAL_S2_2"/>
    <property type="match status" value="1"/>
</dbReference>
<name>RS2_RICCK</name>
<reference key="1">
    <citation type="submission" date="2007-09" db="EMBL/GenBank/DDBJ databases">
        <title>Complete genome sequence of Rickettsia canadensis.</title>
        <authorList>
            <person name="Madan A."/>
            <person name="Fahey J."/>
            <person name="Helton E."/>
            <person name="Ketteman M."/>
            <person name="Madan A."/>
            <person name="Rodrigues S."/>
            <person name="Sanchez A."/>
            <person name="Whiting M."/>
            <person name="Dasch G."/>
            <person name="Eremeeva M."/>
        </authorList>
    </citation>
    <scope>NUCLEOTIDE SEQUENCE [LARGE SCALE GENOMIC DNA]</scope>
    <source>
        <strain>McKiel</strain>
    </source>
</reference>
<gene>
    <name evidence="1" type="primary">rpsB</name>
    <name type="ordered locus">A1E_00415</name>
</gene>
<protein>
    <recommendedName>
        <fullName evidence="1">Small ribosomal subunit protein uS2</fullName>
    </recommendedName>
    <alternativeName>
        <fullName evidence="2">30S ribosomal protein S2</fullName>
    </alternativeName>
</protein>
<accession>A8EXF0</accession>